<name>PPIA_PANPA</name>
<comment type="function">
    <text evidence="1 2">Catalyzes the cis-trans isomerization of proline imidic peptide bonds in oligopeptides (By similarity). Exerts a strong chemotactic effect on leukocytes partly through activation of one of its membrane receptors BSG/CD147, initiating a signaling cascade that culminates in MAPK/ERK activation (By similarity). Activates endothelial cells (ECs) in a proinflammatory manner by stimulating activation of NF-kappa-B and ERK, JNK and p38 MAP-kinases and by inducing expression of adhesion molecules including SELE and VCAM1 (By similarity). Induces apoptosis in ECs by promoting the FOXO1-dependent expression of CCL2 and BCL2L11 which are involved in EC chemotaxis and apoptosis (By similarity). In response to oxidative stress, initiates proapoptotic and antiapoptotic signaling in ECs via activation of NF-kappa-B and AKT1 and up-regulation of antiapoptotic protein BCL2 (By similarity). Negatively regulates MAP3K5/ASK1 kinase activity, autophosphorylation and oxidative stress-induced apoptosis mediated by MAP3K5/ASK1 (By similarity). Necessary for the assembly of TARDBP in heterogeneous nuclear ribonucleoprotein (hnRNP) complexes and regulates TARDBP binding to RNA UG repeats and TARDBP-dependent expression of HDAC6, ATG7 and VCP which are involved in clearance of protein aggregates (By similarity). Plays an important role in platelet activation and aggregation (By similarity). Regulates calcium mobilization and integrin ITGA2B:ITGB3 bidirectional signaling via increased ROS production as well as by facilitating the interaction between integrin and the cell cytoskeleton (By similarity). Binds heparan sulfate glycosaminoglycans (By similarity).</text>
</comment>
<comment type="catalytic activity">
    <reaction evidence="2">
        <text>[protein]-peptidylproline (omega=180) = [protein]-peptidylproline (omega=0)</text>
        <dbReference type="Rhea" id="RHEA:16237"/>
        <dbReference type="Rhea" id="RHEA-COMP:10747"/>
        <dbReference type="Rhea" id="RHEA-COMP:10748"/>
        <dbReference type="ChEBI" id="CHEBI:83833"/>
        <dbReference type="ChEBI" id="CHEBI:83834"/>
        <dbReference type="EC" id="5.2.1.8"/>
    </reaction>
</comment>
<comment type="activity regulation">
    <text evidence="2">Binds cyclosporin A (CsA). CsA mediates some of its effects via an inhibitory action on PPIase.</text>
</comment>
<comment type="subunit">
    <text evidence="1 2">Interacts with protein phosphatase PPP3CA/calcineurin A (By similarity). Interacts with isoform 2 of BSG/CD147 (By similarity). Interacts with FOXO1; the interaction promotes FOXO1 dephosphorylation, nuclear accumulation and transcriptional activity (By similarity). Interacts with integrin ITGA2B:ITGB3; the interaction is ROS and peptidyl-prolyl cis-trans isomerase (PPIase) activity-dependent and is increased in the presence of thrombin (By similarity). Interacts with MAP3K5 (By similarity). Interacts with TARDBP; the interaction is dependent on the RNA-binding activity of TARDBP and the PPIase activity of PPIA/CYPA and the acetylation of PPIA/CYPA at Lys-125 favors the interaction (By similarity). Interacts with HNRNPA1, HNRNPA2B1, HNRNPC, RBMX, HNRNPK and HNRNPM (By similarity).</text>
</comment>
<comment type="subcellular location">
    <subcellularLocation>
        <location evidence="2">Cytoplasm</location>
    </subcellularLocation>
    <subcellularLocation>
        <location evidence="2">Secreted</location>
    </subcellularLocation>
    <subcellularLocation>
        <location evidence="2">Nucleus</location>
    </subcellularLocation>
    <text evidence="2">Secretion occurs in response to oxidative stress in vascular smooth muscle through a vesicular secretory pathway that involves actin remodeling and myosin II activation, and mediates ERK1/2 activation.</text>
</comment>
<comment type="PTM">
    <text evidence="2">Acetylation at Lys-125 markedly inhibits catalysis of cis to trans isomerization (By similarity). PPIA acetylation also antagonizes the immunosuppressive effects of cyclosporine by inhibiting the sequential steps of cyclosporine binding and calcineurin inhibition (By similarity). Acetylation at Lys-125 favors the interaction with TARDBP (By similarity).</text>
</comment>
<comment type="similarity">
    <text evidence="5">Belongs to the cyclophilin-type PPIase family. PPIase A subfamily.</text>
</comment>
<protein>
    <recommendedName>
        <fullName>Peptidyl-prolyl cis-trans isomerase A</fullName>
        <shortName>PPIase A</shortName>
        <ecNumber evidence="2">5.2.1.8</ecNumber>
    </recommendedName>
    <alternativeName>
        <fullName>Cyclophilin A</fullName>
    </alternativeName>
    <alternativeName>
        <fullName>Cyclosporin A-binding protein</fullName>
    </alternativeName>
    <alternativeName>
        <fullName>Rotamase A</fullName>
    </alternativeName>
    <component>
        <recommendedName>
            <fullName>Peptidyl-prolyl cis-trans isomerase A, N-terminally processed</fullName>
        </recommendedName>
    </component>
</protein>
<feature type="chain" id="PRO_0000423246" description="Peptidyl-prolyl cis-trans isomerase A">
    <location>
        <begin position="1"/>
        <end position="165"/>
    </location>
</feature>
<feature type="initiator methionine" description="Removed; alternate" evidence="2">
    <location>
        <position position="1"/>
    </location>
</feature>
<feature type="chain" id="PRO_0000260463" description="Peptidyl-prolyl cis-trans isomerase A, N-terminally processed">
    <location>
        <begin position="2"/>
        <end position="165"/>
    </location>
</feature>
<feature type="domain" description="PPIase cyclophilin-type" evidence="4">
    <location>
        <begin position="7"/>
        <end position="163"/>
    </location>
</feature>
<feature type="modified residue" description="N-acetylmethionine" evidence="2">
    <location>
        <position position="1"/>
    </location>
</feature>
<feature type="modified residue" description="N-acetylvaline; in Peptidyl-prolyl cis-trans isomerase A, N-terminally processed" evidence="2">
    <location>
        <position position="2"/>
    </location>
</feature>
<feature type="modified residue" description="N6-acetyllysine; alternate" evidence="2">
    <location>
        <position position="28"/>
    </location>
</feature>
<feature type="modified residue" description="N6-acetyllysine" evidence="2">
    <location>
        <position position="44"/>
    </location>
</feature>
<feature type="modified residue" description="N6-acetyllysine" evidence="2">
    <location>
        <position position="76"/>
    </location>
</feature>
<feature type="modified residue" description="Phosphoserine" evidence="2">
    <location>
        <position position="77"/>
    </location>
</feature>
<feature type="modified residue" description="N6-acetyllysine; alternate" evidence="2">
    <location>
        <position position="82"/>
    </location>
</feature>
<feature type="modified residue" description="Phosphothreonine" evidence="2">
    <location>
        <position position="93"/>
    </location>
</feature>
<feature type="modified residue" description="N6-acetyllysine" evidence="2">
    <location>
        <position position="125"/>
    </location>
</feature>
<feature type="modified residue" description="N6-acetyllysine" evidence="2">
    <location>
        <position position="131"/>
    </location>
</feature>
<feature type="modified residue" description="N6-acetyllysine" evidence="1">
    <location>
        <position position="133"/>
    </location>
</feature>
<feature type="glycosylation site" description="N-linked (GlcNAc...) asparagine" evidence="3">
    <location>
        <position position="108"/>
    </location>
</feature>
<feature type="cross-link" description="Glycyl lysine isopeptide (Lys-Gly) (interchain with G-Cter in SUMO2); alternate" evidence="2">
    <location>
        <position position="28"/>
    </location>
</feature>
<feature type="cross-link" description="Glycyl lysine isopeptide (Lys-Gly) (interchain with G-Cter in ubiquitin); alternate" evidence="2">
    <location>
        <position position="28"/>
    </location>
</feature>
<feature type="cross-link" description="Glycyl lysine isopeptide (Lys-Gly) (interchain with G-Cter in SUMO2); alternate" evidence="2">
    <location>
        <position position="82"/>
    </location>
</feature>
<evidence type="ECO:0000250" key="1">
    <source>
        <dbReference type="UniProtKB" id="P17742"/>
    </source>
</evidence>
<evidence type="ECO:0000250" key="2">
    <source>
        <dbReference type="UniProtKB" id="P62937"/>
    </source>
</evidence>
<evidence type="ECO:0000255" key="3"/>
<evidence type="ECO:0000255" key="4">
    <source>
        <dbReference type="PROSITE-ProRule" id="PRU00156"/>
    </source>
</evidence>
<evidence type="ECO:0000305" key="5"/>
<proteinExistence type="inferred from homology"/>
<organism>
    <name type="scientific">Pan paniscus</name>
    <name type="common">Pygmy chimpanzee</name>
    <name type="synonym">Bonobo</name>
    <dbReference type="NCBI Taxonomy" id="9597"/>
    <lineage>
        <taxon>Eukaryota</taxon>
        <taxon>Metazoa</taxon>
        <taxon>Chordata</taxon>
        <taxon>Craniata</taxon>
        <taxon>Vertebrata</taxon>
        <taxon>Euteleostomi</taxon>
        <taxon>Mammalia</taxon>
        <taxon>Eutheria</taxon>
        <taxon>Euarchontoglires</taxon>
        <taxon>Primates</taxon>
        <taxon>Haplorrhini</taxon>
        <taxon>Catarrhini</taxon>
        <taxon>Hominidae</taxon>
        <taxon>Pan</taxon>
    </lineage>
</organism>
<gene>
    <name type="primary">PPIA</name>
</gene>
<accession>Q0ZQL2</accession>
<dbReference type="EC" id="5.2.1.8" evidence="2"/>
<dbReference type="EMBL" id="DQ251275">
    <property type="protein sequence ID" value="ABB77875.1"/>
    <property type="molecule type" value="Genomic_DNA"/>
</dbReference>
<dbReference type="RefSeq" id="XP_008967123.1">
    <property type="nucleotide sequence ID" value="XM_008968875.1"/>
</dbReference>
<dbReference type="SMR" id="Q0ZQL2"/>
<dbReference type="STRING" id="9597.ENSPPAP00000036052"/>
<dbReference type="GlyCosmos" id="Q0ZQL2">
    <property type="glycosylation" value="1 site, No reported glycans"/>
</dbReference>
<dbReference type="Ensembl" id="ENSPPAT00000058942.1">
    <property type="protein sequence ID" value="ENSPPAP00000036052.1"/>
    <property type="gene ID" value="ENSPPAG00000040793.1"/>
</dbReference>
<dbReference type="GeneID" id="100973085"/>
<dbReference type="KEGG" id="pps:100973085"/>
<dbReference type="CTD" id="5478"/>
<dbReference type="eggNOG" id="KOG0865">
    <property type="taxonomic scope" value="Eukaryota"/>
</dbReference>
<dbReference type="GeneTree" id="ENSGT00950000183087"/>
<dbReference type="OMA" id="CVSIYGH"/>
<dbReference type="Proteomes" id="UP000240080">
    <property type="component" value="Chromosome 7"/>
</dbReference>
<dbReference type="Bgee" id="ENSPPAG00000040793">
    <property type="expression patterns" value="Expressed in prefrontal cortex and 6 other cell types or tissues"/>
</dbReference>
<dbReference type="GO" id="GO:0005737">
    <property type="term" value="C:cytoplasm"/>
    <property type="evidence" value="ECO:0000250"/>
    <property type="project" value="UniProtKB"/>
</dbReference>
<dbReference type="GO" id="GO:0005829">
    <property type="term" value="C:cytosol"/>
    <property type="evidence" value="ECO:0000250"/>
    <property type="project" value="UniProtKB"/>
</dbReference>
<dbReference type="GO" id="GO:0005576">
    <property type="term" value="C:extracellular region"/>
    <property type="evidence" value="ECO:0000250"/>
    <property type="project" value="UniProtKB"/>
</dbReference>
<dbReference type="GO" id="GO:0005634">
    <property type="term" value="C:nucleus"/>
    <property type="evidence" value="ECO:0000250"/>
    <property type="project" value="UniProtKB"/>
</dbReference>
<dbReference type="GO" id="GO:0032991">
    <property type="term" value="C:protein-containing complex"/>
    <property type="evidence" value="ECO:0007669"/>
    <property type="project" value="Ensembl"/>
</dbReference>
<dbReference type="GO" id="GO:0016018">
    <property type="term" value="F:cyclosporin A binding"/>
    <property type="evidence" value="ECO:0007669"/>
    <property type="project" value="TreeGrafter"/>
</dbReference>
<dbReference type="GO" id="GO:1904399">
    <property type="term" value="F:heparan sulfate binding"/>
    <property type="evidence" value="ECO:0000250"/>
    <property type="project" value="UniProtKB"/>
</dbReference>
<dbReference type="GO" id="GO:0005178">
    <property type="term" value="F:integrin binding"/>
    <property type="evidence" value="ECO:0000250"/>
    <property type="project" value="UniProtKB"/>
</dbReference>
<dbReference type="GO" id="GO:0003755">
    <property type="term" value="F:peptidyl-prolyl cis-trans isomerase activity"/>
    <property type="evidence" value="ECO:0000250"/>
    <property type="project" value="UniProtKB"/>
</dbReference>
<dbReference type="GO" id="GO:0032148">
    <property type="term" value="P:activation of protein kinase B activity"/>
    <property type="evidence" value="ECO:0000250"/>
    <property type="project" value="UniProtKB"/>
</dbReference>
<dbReference type="GO" id="GO:0006915">
    <property type="term" value="P:apoptotic process"/>
    <property type="evidence" value="ECO:0000250"/>
    <property type="project" value="UniProtKB"/>
</dbReference>
<dbReference type="GO" id="GO:0060352">
    <property type="term" value="P:cell adhesion molecule production"/>
    <property type="evidence" value="ECO:0000250"/>
    <property type="project" value="UniProtKB"/>
</dbReference>
<dbReference type="GO" id="GO:0034599">
    <property type="term" value="P:cellular response to oxidative stress"/>
    <property type="evidence" value="ECO:0000250"/>
    <property type="project" value="UniProtKB"/>
</dbReference>
<dbReference type="GO" id="GO:0042118">
    <property type="term" value="P:endothelial cell activation"/>
    <property type="evidence" value="ECO:0000250"/>
    <property type="project" value="UniProtKB"/>
</dbReference>
<dbReference type="GO" id="GO:0030595">
    <property type="term" value="P:leukocyte chemotaxis"/>
    <property type="evidence" value="ECO:0000250"/>
    <property type="project" value="UniProtKB"/>
</dbReference>
<dbReference type="GO" id="GO:0034389">
    <property type="term" value="P:lipid droplet organization"/>
    <property type="evidence" value="ECO:0007669"/>
    <property type="project" value="Ensembl"/>
</dbReference>
<dbReference type="GO" id="GO:1902176">
    <property type="term" value="P:negative regulation of oxidative stress-induced intrinsic apoptotic signaling pathway"/>
    <property type="evidence" value="ECO:0000250"/>
    <property type="project" value="UniProtKB"/>
</dbReference>
<dbReference type="GO" id="GO:0061944">
    <property type="term" value="P:negative regulation of protein K48-linked ubiquitination"/>
    <property type="evidence" value="ECO:0000250"/>
    <property type="project" value="UniProtKB"/>
</dbReference>
<dbReference type="GO" id="GO:0006469">
    <property type="term" value="P:negative regulation of protein kinase activity"/>
    <property type="evidence" value="ECO:0000250"/>
    <property type="project" value="UniProtKB"/>
</dbReference>
<dbReference type="GO" id="GO:0001933">
    <property type="term" value="P:negative regulation of protein phosphorylation"/>
    <property type="evidence" value="ECO:0000250"/>
    <property type="project" value="UniProtKB"/>
</dbReference>
<dbReference type="GO" id="GO:0032873">
    <property type="term" value="P:negative regulation of stress-activated MAPK cascade"/>
    <property type="evidence" value="ECO:0000250"/>
    <property type="project" value="UniProtKB"/>
</dbReference>
<dbReference type="GO" id="GO:1903901">
    <property type="term" value="P:negative regulation of viral life cycle"/>
    <property type="evidence" value="ECO:0007669"/>
    <property type="project" value="Ensembl"/>
</dbReference>
<dbReference type="GO" id="GO:0030593">
    <property type="term" value="P:neutrophil chemotaxis"/>
    <property type="evidence" value="ECO:0000250"/>
    <property type="project" value="UniProtKB"/>
</dbReference>
<dbReference type="GO" id="GO:0030168">
    <property type="term" value="P:platelet activation"/>
    <property type="evidence" value="ECO:0000250"/>
    <property type="project" value="UniProtKB"/>
</dbReference>
<dbReference type="GO" id="GO:0070527">
    <property type="term" value="P:platelet aggregation"/>
    <property type="evidence" value="ECO:0000250"/>
    <property type="project" value="UniProtKB"/>
</dbReference>
<dbReference type="GO" id="GO:0043410">
    <property type="term" value="P:positive regulation of MAPK cascade"/>
    <property type="evidence" value="ECO:0000250"/>
    <property type="project" value="UniProtKB"/>
</dbReference>
<dbReference type="GO" id="GO:0051092">
    <property type="term" value="P:positive regulation of NF-kappaB transcription factor activity"/>
    <property type="evidence" value="ECO:0000250"/>
    <property type="project" value="UniProtKB"/>
</dbReference>
<dbReference type="GO" id="GO:0001934">
    <property type="term" value="P:positive regulation of protein phosphorylation"/>
    <property type="evidence" value="ECO:0000250"/>
    <property type="project" value="UniProtKB"/>
</dbReference>
<dbReference type="GO" id="GO:0050714">
    <property type="term" value="P:positive regulation of protein secretion"/>
    <property type="evidence" value="ECO:0007669"/>
    <property type="project" value="Ensembl"/>
</dbReference>
<dbReference type="GO" id="GO:0045070">
    <property type="term" value="P:positive regulation of viral genome replication"/>
    <property type="evidence" value="ECO:0007669"/>
    <property type="project" value="Ensembl"/>
</dbReference>
<dbReference type="GO" id="GO:0006457">
    <property type="term" value="P:protein folding"/>
    <property type="evidence" value="ECO:0007669"/>
    <property type="project" value="InterPro"/>
</dbReference>
<dbReference type="GO" id="GO:0000413">
    <property type="term" value="P:protein peptidyl-prolyl isomerization"/>
    <property type="evidence" value="ECO:0000250"/>
    <property type="project" value="UniProtKB"/>
</dbReference>
<dbReference type="GO" id="GO:2001233">
    <property type="term" value="P:regulation of apoptotic signaling pathway"/>
    <property type="evidence" value="ECO:0000250"/>
    <property type="project" value="UniProtKB"/>
</dbReference>
<dbReference type="GO" id="GO:0045069">
    <property type="term" value="P:regulation of viral genome replication"/>
    <property type="evidence" value="ECO:0000250"/>
    <property type="project" value="UniProtKB"/>
</dbReference>
<dbReference type="CDD" id="cd01926">
    <property type="entry name" value="cyclophilin_ABH_like"/>
    <property type="match status" value="1"/>
</dbReference>
<dbReference type="FunFam" id="2.40.100.10:FF:000011">
    <property type="entry name" value="Peptidyl-prolyl cis-trans isomerase A"/>
    <property type="match status" value="1"/>
</dbReference>
<dbReference type="Gene3D" id="2.40.100.10">
    <property type="entry name" value="Cyclophilin-like"/>
    <property type="match status" value="1"/>
</dbReference>
<dbReference type="InterPro" id="IPR029000">
    <property type="entry name" value="Cyclophilin-like_dom_sf"/>
</dbReference>
<dbReference type="InterPro" id="IPR024936">
    <property type="entry name" value="Cyclophilin-type_PPIase"/>
</dbReference>
<dbReference type="InterPro" id="IPR020892">
    <property type="entry name" value="Cyclophilin-type_PPIase_CS"/>
</dbReference>
<dbReference type="InterPro" id="IPR002130">
    <property type="entry name" value="Cyclophilin-type_PPIase_dom"/>
</dbReference>
<dbReference type="PANTHER" id="PTHR11071">
    <property type="entry name" value="PEPTIDYL-PROLYL CIS-TRANS ISOMERASE"/>
    <property type="match status" value="1"/>
</dbReference>
<dbReference type="PANTHER" id="PTHR11071:SF490">
    <property type="entry name" value="PEPTIDYL-PROLYL CIS-TRANS ISOMERASE A"/>
    <property type="match status" value="1"/>
</dbReference>
<dbReference type="Pfam" id="PF00160">
    <property type="entry name" value="Pro_isomerase"/>
    <property type="match status" value="1"/>
</dbReference>
<dbReference type="PIRSF" id="PIRSF001467">
    <property type="entry name" value="Peptidylpro_ismrse"/>
    <property type="match status" value="1"/>
</dbReference>
<dbReference type="PRINTS" id="PR00153">
    <property type="entry name" value="CSAPPISMRASE"/>
</dbReference>
<dbReference type="SUPFAM" id="SSF50891">
    <property type="entry name" value="Cyclophilin-like"/>
    <property type="match status" value="1"/>
</dbReference>
<dbReference type="PROSITE" id="PS00170">
    <property type="entry name" value="CSA_PPIASE_1"/>
    <property type="match status" value="1"/>
</dbReference>
<dbReference type="PROSITE" id="PS50072">
    <property type="entry name" value="CSA_PPIASE_2"/>
    <property type="match status" value="1"/>
</dbReference>
<reference key="1">
    <citation type="journal article" date="2006" name="Retrovirology">
        <title>Patterns of evolution of host proteins involved in retroviral pathogenesis.</title>
        <authorList>
            <person name="Ortiz M."/>
            <person name="Bleiber G."/>
            <person name="Martinez R."/>
            <person name="Kaessmann H."/>
            <person name="Telenti A."/>
        </authorList>
    </citation>
    <scope>NUCLEOTIDE SEQUENCE [GENOMIC DNA]</scope>
</reference>
<keyword id="KW-0007">Acetylation</keyword>
<keyword id="KW-0053">Apoptosis</keyword>
<keyword id="KW-0963">Cytoplasm</keyword>
<keyword id="KW-0325">Glycoprotein</keyword>
<keyword id="KW-0413">Isomerase</keyword>
<keyword id="KW-1017">Isopeptide bond</keyword>
<keyword id="KW-0539">Nucleus</keyword>
<keyword id="KW-0597">Phosphoprotein</keyword>
<keyword id="KW-1185">Reference proteome</keyword>
<keyword id="KW-0697">Rotamase</keyword>
<keyword id="KW-0964">Secreted</keyword>
<keyword id="KW-0832">Ubl conjugation</keyword>
<sequence>MVNPTVFFDIAVDGEPLGRVSFELFADKVPKTAENFRALSTGEKGFGYKGSCFHRIIPGFMCQGGDFTRHNGTGGKSIYGEKFEDENFILKHTGPGILSMANAGPNTNGSQFFICTAKTEWLDGKHVVFGKVKEGMNIVEAMERFGSRNGKTSKKITIADCGQLE</sequence>